<reference key="1">
    <citation type="journal article" date="1999" name="DNA Res.">
        <title>Prediction of the coding sequences of unidentified human genes. XIV. The complete sequences of 100 new cDNA clones from brain which code for large proteins in vitro.</title>
        <authorList>
            <person name="Kikuno R."/>
            <person name="Nagase T."/>
            <person name="Ishikawa K."/>
            <person name="Hirosawa M."/>
            <person name="Miyajima N."/>
            <person name="Tanaka A."/>
            <person name="Kotani H."/>
            <person name="Nomura N."/>
            <person name="Ohara O."/>
        </authorList>
    </citation>
    <scope>NUCLEOTIDE SEQUENCE [LARGE SCALE MRNA] (ISOFORM 2)</scope>
    <source>
        <tissue>Brain</tissue>
    </source>
</reference>
<reference key="2">
    <citation type="journal article" date="2004" name="Nat. Genet.">
        <title>Complete sequencing and characterization of 21,243 full-length human cDNAs.</title>
        <authorList>
            <person name="Ota T."/>
            <person name="Suzuki Y."/>
            <person name="Nishikawa T."/>
            <person name="Otsuki T."/>
            <person name="Sugiyama T."/>
            <person name="Irie R."/>
            <person name="Wakamatsu A."/>
            <person name="Hayashi K."/>
            <person name="Sato H."/>
            <person name="Nagai K."/>
            <person name="Kimura K."/>
            <person name="Makita H."/>
            <person name="Sekine M."/>
            <person name="Obayashi M."/>
            <person name="Nishi T."/>
            <person name="Shibahara T."/>
            <person name="Tanaka T."/>
            <person name="Ishii S."/>
            <person name="Yamamoto J."/>
            <person name="Saito K."/>
            <person name="Kawai Y."/>
            <person name="Isono Y."/>
            <person name="Nakamura Y."/>
            <person name="Nagahari K."/>
            <person name="Murakami K."/>
            <person name="Yasuda T."/>
            <person name="Iwayanagi T."/>
            <person name="Wagatsuma M."/>
            <person name="Shiratori A."/>
            <person name="Sudo H."/>
            <person name="Hosoiri T."/>
            <person name="Kaku Y."/>
            <person name="Kodaira H."/>
            <person name="Kondo H."/>
            <person name="Sugawara M."/>
            <person name="Takahashi M."/>
            <person name="Kanda K."/>
            <person name="Yokoi T."/>
            <person name="Furuya T."/>
            <person name="Kikkawa E."/>
            <person name="Omura Y."/>
            <person name="Abe K."/>
            <person name="Kamihara K."/>
            <person name="Katsuta N."/>
            <person name="Sato K."/>
            <person name="Tanikawa M."/>
            <person name="Yamazaki M."/>
            <person name="Ninomiya K."/>
            <person name="Ishibashi T."/>
            <person name="Yamashita H."/>
            <person name="Murakawa K."/>
            <person name="Fujimori K."/>
            <person name="Tanai H."/>
            <person name="Kimata M."/>
            <person name="Watanabe M."/>
            <person name="Hiraoka S."/>
            <person name="Chiba Y."/>
            <person name="Ishida S."/>
            <person name="Ono Y."/>
            <person name="Takiguchi S."/>
            <person name="Watanabe S."/>
            <person name="Yosida M."/>
            <person name="Hotuta T."/>
            <person name="Kusano J."/>
            <person name="Kanehori K."/>
            <person name="Takahashi-Fujii A."/>
            <person name="Hara H."/>
            <person name="Tanase T.-O."/>
            <person name="Nomura Y."/>
            <person name="Togiya S."/>
            <person name="Komai F."/>
            <person name="Hara R."/>
            <person name="Takeuchi K."/>
            <person name="Arita M."/>
            <person name="Imose N."/>
            <person name="Musashino K."/>
            <person name="Yuuki H."/>
            <person name="Oshima A."/>
            <person name="Sasaki N."/>
            <person name="Aotsuka S."/>
            <person name="Yoshikawa Y."/>
            <person name="Matsunawa H."/>
            <person name="Ichihara T."/>
            <person name="Shiohata N."/>
            <person name="Sano S."/>
            <person name="Moriya S."/>
            <person name="Momiyama H."/>
            <person name="Satoh N."/>
            <person name="Takami S."/>
            <person name="Terashima Y."/>
            <person name="Suzuki O."/>
            <person name="Nakagawa S."/>
            <person name="Senoh A."/>
            <person name="Mizoguchi H."/>
            <person name="Goto Y."/>
            <person name="Shimizu F."/>
            <person name="Wakebe H."/>
            <person name="Hishigaki H."/>
            <person name="Watanabe T."/>
            <person name="Sugiyama A."/>
            <person name="Takemoto M."/>
            <person name="Kawakami B."/>
            <person name="Yamazaki M."/>
            <person name="Watanabe K."/>
            <person name="Kumagai A."/>
            <person name="Itakura S."/>
            <person name="Fukuzumi Y."/>
            <person name="Fujimori Y."/>
            <person name="Komiyama M."/>
            <person name="Tashiro H."/>
            <person name="Tanigami A."/>
            <person name="Fujiwara T."/>
            <person name="Ono T."/>
            <person name="Yamada K."/>
            <person name="Fujii Y."/>
            <person name="Ozaki K."/>
            <person name="Hirao M."/>
            <person name="Ohmori Y."/>
            <person name="Kawabata A."/>
            <person name="Hikiji T."/>
            <person name="Kobatake N."/>
            <person name="Inagaki H."/>
            <person name="Ikema Y."/>
            <person name="Okamoto S."/>
            <person name="Okitani R."/>
            <person name="Kawakami T."/>
            <person name="Noguchi S."/>
            <person name="Itoh T."/>
            <person name="Shigeta K."/>
            <person name="Senba T."/>
            <person name="Matsumura K."/>
            <person name="Nakajima Y."/>
            <person name="Mizuno T."/>
            <person name="Morinaga M."/>
            <person name="Sasaki M."/>
            <person name="Togashi T."/>
            <person name="Oyama M."/>
            <person name="Hata H."/>
            <person name="Watanabe M."/>
            <person name="Komatsu T."/>
            <person name="Mizushima-Sugano J."/>
            <person name="Satoh T."/>
            <person name="Shirai Y."/>
            <person name="Takahashi Y."/>
            <person name="Nakagawa K."/>
            <person name="Okumura K."/>
            <person name="Nagase T."/>
            <person name="Nomura N."/>
            <person name="Kikuchi H."/>
            <person name="Masuho Y."/>
            <person name="Yamashita R."/>
            <person name="Nakai K."/>
            <person name="Yada T."/>
            <person name="Nakamura Y."/>
            <person name="Ohara O."/>
            <person name="Isogai T."/>
            <person name="Sugano S."/>
        </authorList>
    </citation>
    <scope>NUCLEOTIDE SEQUENCE [LARGE SCALE MRNA]</scope>
    <source>
        <tissue>Testis</tissue>
    </source>
</reference>
<reference key="3">
    <citation type="journal article" date="2007" name="BMC Genomics">
        <title>The full-ORF clone resource of the German cDNA consortium.</title>
        <authorList>
            <person name="Bechtel S."/>
            <person name="Rosenfelder H."/>
            <person name="Duda A."/>
            <person name="Schmidt C.P."/>
            <person name="Ernst U."/>
            <person name="Wellenreuther R."/>
            <person name="Mehrle A."/>
            <person name="Schuster C."/>
            <person name="Bahr A."/>
            <person name="Bloecker H."/>
            <person name="Heubner D."/>
            <person name="Hoerlein A."/>
            <person name="Michel G."/>
            <person name="Wedler H."/>
            <person name="Koehrer K."/>
            <person name="Ottenwaelder B."/>
            <person name="Poustka A."/>
            <person name="Wiemann S."/>
            <person name="Schupp I."/>
        </authorList>
    </citation>
    <scope>NUCLEOTIDE SEQUENCE [LARGE SCALE MRNA] (ISOFORM 1)</scope>
    <source>
        <tissue>Testis</tissue>
        <tissue>Uterus</tissue>
    </source>
</reference>
<reference key="4">
    <citation type="journal article" date="2004" name="Genome Res.">
        <title>The status, quality, and expansion of the NIH full-length cDNA project: the Mammalian Gene Collection (MGC).</title>
        <authorList>
            <consortium name="The MGC Project Team"/>
        </authorList>
    </citation>
    <scope>NUCLEOTIDE SEQUENCE [LARGE SCALE MRNA] OF 542-953</scope>
    <source>
        <tissue>Duodenum</tissue>
    </source>
</reference>
<reference key="5">
    <citation type="journal article" date="2009" name="Anal. Chem.">
        <title>Lys-N and trypsin cover complementary parts of the phosphoproteome in a refined SCX-based approach.</title>
        <authorList>
            <person name="Gauci S."/>
            <person name="Helbig A.O."/>
            <person name="Slijper M."/>
            <person name="Krijgsveld J."/>
            <person name="Heck A.J."/>
            <person name="Mohammed S."/>
        </authorList>
    </citation>
    <scope>IDENTIFICATION BY MASS SPECTROMETRY [LARGE SCALE ANALYSIS]</scope>
</reference>
<reference key="6">
    <citation type="journal article" date="2013" name="J. Proteome Res.">
        <title>Toward a comprehensive characterization of a human cancer cell phosphoproteome.</title>
        <authorList>
            <person name="Zhou H."/>
            <person name="Di Palma S."/>
            <person name="Preisinger C."/>
            <person name="Peng M."/>
            <person name="Polat A.N."/>
            <person name="Heck A.J."/>
            <person name="Mohammed S."/>
        </authorList>
    </citation>
    <scope>PHOSPHORYLATION [LARGE SCALE ANALYSIS] AT SER-95 AND SER-427</scope>
    <scope>IDENTIFICATION BY MASS SPECTROMETRY [LARGE SCALE ANALYSIS]</scope>
    <source>
        <tissue>Cervix carcinoma</tissue>
        <tissue>Erythroleukemia</tissue>
    </source>
</reference>
<keyword id="KW-0025">Alternative splicing</keyword>
<keyword id="KW-0238">DNA-binding</keyword>
<keyword id="KW-0479">Metal-binding</keyword>
<keyword id="KW-0539">Nucleus</keyword>
<keyword id="KW-0597">Phosphoprotein</keyword>
<keyword id="KW-1267">Proteomics identification</keyword>
<keyword id="KW-1185">Reference proteome</keyword>
<keyword id="KW-0677">Repeat</keyword>
<keyword id="KW-0804">Transcription</keyword>
<keyword id="KW-0805">Transcription regulation</keyword>
<keyword id="KW-0862">Zinc</keyword>
<keyword id="KW-0863">Zinc-finger</keyword>
<organism>
    <name type="scientific">Homo sapiens</name>
    <name type="common">Human</name>
    <dbReference type="NCBI Taxonomy" id="9606"/>
    <lineage>
        <taxon>Eukaryota</taxon>
        <taxon>Metazoa</taxon>
        <taxon>Chordata</taxon>
        <taxon>Craniata</taxon>
        <taxon>Vertebrata</taxon>
        <taxon>Euteleostomi</taxon>
        <taxon>Mammalia</taxon>
        <taxon>Eutheria</taxon>
        <taxon>Euarchontoglires</taxon>
        <taxon>Primates</taxon>
        <taxon>Haplorrhini</taxon>
        <taxon>Catarrhini</taxon>
        <taxon>Hominidae</taxon>
        <taxon>Homo</taxon>
    </lineage>
</organism>
<feature type="chain" id="PRO_0000047625" description="Zinc finger protein 507">
    <location>
        <begin position="1"/>
        <end position="953"/>
    </location>
</feature>
<feature type="zinc finger region" description="C2H2-type 1" evidence="1">
    <location>
        <begin position="125"/>
        <end position="147"/>
    </location>
</feature>
<feature type="zinc finger region" description="C2H2-type 2" evidence="1">
    <location>
        <begin position="155"/>
        <end position="185"/>
    </location>
</feature>
<feature type="zinc finger region" description="C2H2-type 3" evidence="1">
    <location>
        <begin position="248"/>
        <end position="270"/>
    </location>
</feature>
<feature type="zinc finger region" description="C2H2-type 4" evidence="1">
    <location>
        <begin position="641"/>
        <end position="663"/>
    </location>
</feature>
<feature type="zinc finger region" description="C2H2-type 5" evidence="1">
    <location>
        <begin position="669"/>
        <end position="691"/>
    </location>
</feature>
<feature type="zinc finger region" description="C2H2-type 6" evidence="1">
    <location>
        <begin position="697"/>
        <end position="720"/>
    </location>
</feature>
<feature type="zinc finger region" description="C2H2-type 7" evidence="1">
    <location>
        <begin position="758"/>
        <end position="780"/>
    </location>
</feature>
<feature type="zinc finger region" description="C2H2-type 8" evidence="1">
    <location>
        <begin position="786"/>
        <end position="808"/>
    </location>
</feature>
<feature type="zinc finger region" description="C2H2-type 9" evidence="1">
    <location>
        <begin position="911"/>
        <end position="933"/>
    </location>
</feature>
<feature type="region of interest" description="Disordered" evidence="2">
    <location>
        <begin position="470"/>
        <end position="489"/>
    </location>
</feature>
<feature type="region of interest" description="Disordered" evidence="2">
    <location>
        <begin position="831"/>
        <end position="888"/>
    </location>
</feature>
<feature type="compositionally biased region" description="Polar residues" evidence="2">
    <location>
        <begin position="854"/>
        <end position="888"/>
    </location>
</feature>
<feature type="modified residue" description="Phosphoserine" evidence="5">
    <location>
        <position position="95"/>
    </location>
</feature>
<feature type="modified residue" description="Phosphoserine" evidence="5">
    <location>
        <position position="427"/>
    </location>
</feature>
<feature type="splice variant" id="VSP_035357" description="In isoform 2." evidence="3">
    <original>NKSSVQKQYRCDVCD</original>
    <variation>IYVFCYAGCSDLHMT</variation>
    <location>
        <begin position="750"/>
        <end position="764"/>
    </location>
</feature>
<feature type="splice variant" id="VSP_035358" description="In isoform 2." evidence="3">
    <location>
        <begin position="765"/>
        <end position="953"/>
    </location>
</feature>
<feature type="sequence conflict" description="In Ref. 2; BAF85215." evidence="4" ref="2">
    <original>M</original>
    <variation>V</variation>
    <location>
        <position position="361"/>
    </location>
</feature>
<feature type="sequence conflict" description="In Ref. 2; BAF85215." evidence="4" ref="2">
    <original>I</original>
    <variation>M</variation>
    <location>
        <position position="398"/>
    </location>
</feature>
<feature type="sequence conflict" description="In Ref. 2; BAF85215." evidence="4" ref="2">
    <original>L</original>
    <variation>P</variation>
    <location>
        <position position="722"/>
    </location>
</feature>
<feature type="sequence conflict" description="In Ref. 2; BAF85215." evidence="4" ref="2">
    <original>I</original>
    <variation>T</variation>
    <location>
        <position position="941"/>
    </location>
</feature>
<sequence length="953" mass="105767">MEESSSVAMLVPDIGEQEAILTAESIISPSLEIDEQRKTKPDPLIHVIQKLSKIVENEKSQKCLLIGKKRPRSSAATHSLETQELCEIPAKVIQSPAADTRRAEMSQTNFTPDTLAQNEGKAMSYQCSLCKFLSSSFSVLKDHIKQHGQQNEVILMCSECHITSRSQEELEAHVVNDHDNDANIHTQSKAQQCVSPSSSLCRKTTERNETIPDIPVSVDNLQTHTVQTASVAEMGRRKWYAYEQYGMYRCLFCSYTCGQQRMLKTHAWKHAGEVDCSYPIFENENEPLGLLDSSAAAAPGGVDAVVIAIGESELSIHNGPSVQVQICSSEQLSSSSPLEQSAERGVHLSQSVTLDPNEEEMLEVISDAEENLIPDSLLTSAQKIISSSPNKKGHVNVIVERLPSAEETLSQKRFLMNTEMEEGKDLSLTEAQIGREGMDDVYRADKCTVDIGGLIIGWSSSEKKDELMNKGLATDENAPPGRRRTNSESLRLHSLAAEALVTMPIRAAELTRANLGHYGDINLLDPDTSQRQVDSTLAAYSKMMSPLKNSSDGLTSLNQSNSTLVALPEGRQELSDGQVKTGISMSLLTVIEKLRERTDQNASDDDILKELQDNAQCQPNSDTSLSGNNVVEYIPNAERPYRCRLCHYTSGNKGYIKQHLRVHRQRQPYQCPICEHIADNSKDLESHMIHHCKTRIYQCKQCEESFHYKSQLRNHEREQHSLPDTLSIATSNEPRISSDTADGKCVQEGNKSSVQKQYRCDVCDYTSTTYVGVRNHRRIHNSDKPYRCSLCGYVCSHPPSLKSHMWKHASDQNYNYEQVNKAINDAISQSGRVLGKSPGKTQLKSSEESADPVTGSSENAVSSSELMSQTPSEVLGTNENEKLSPTSNTSYSLEKISSLAPPSMEYCVLLFCCCICGFESTSKENLLDHMKEHEGEIVNIILNKDHNTALNTN</sequence>
<evidence type="ECO:0000255" key="1">
    <source>
        <dbReference type="PROSITE-ProRule" id="PRU00042"/>
    </source>
</evidence>
<evidence type="ECO:0000256" key="2">
    <source>
        <dbReference type="SAM" id="MobiDB-lite"/>
    </source>
</evidence>
<evidence type="ECO:0000303" key="3">
    <source>
    </source>
</evidence>
<evidence type="ECO:0000305" key="4"/>
<evidence type="ECO:0007744" key="5">
    <source>
    </source>
</evidence>
<name>ZN507_HUMAN</name>
<protein>
    <recommendedName>
        <fullName>Zinc finger protein 507</fullName>
    </recommendedName>
</protein>
<comment type="function">
    <text>May be involved in transcriptional regulation.</text>
</comment>
<comment type="subcellular location">
    <subcellularLocation>
        <location evidence="4">Nucleus</location>
    </subcellularLocation>
</comment>
<comment type="alternative products">
    <event type="alternative splicing"/>
    <isoform>
        <id>Q8TCN5-1</id>
        <name>1</name>
        <sequence type="displayed"/>
    </isoform>
    <isoform>
        <id>Q8TCN5-2</id>
        <name>2</name>
        <sequence type="described" ref="VSP_035357 VSP_035358"/>
    </isoform>
</comment>
<comment type="similarity">
    <text evidence="4">Belongs to the krueppel C2H2-type zinc-finger protein family.</text>
</comment>
<comment type="sequence caution" evidence="4">
    <conflict type="erroneous initiation">
        <sequence resource="EMBL-CDS" id="BAA83036"/>
    </conflict>
</comment>
<comment type="sequence caution" evidence="4">
    <conflict type="erroneous initiation">
        <sequence resource="EMBL-CDS" id="CAD28536"/>
    </conflict>
    <text>Truncated N-terminus.</text>
</comment>
<comment type="sequence caution" evidence="4">
    <conflict type="frameshift">
        <sequence resource="EMBL-CDS" id="CAD28536"/>
    </conflict>
</comment>
<comment type="sequence caution" evidence="4">
    <conflict type="erroneous initiation">
        <sequence resource="EMBL-CDS" id="CAE45937"/>
    </conflict>
</comment>
<dbReference type="EMBL" id="AB029007">
    <property type="protein sequence ID" value="BAA83036.2"/>
    <property type="status" value="ALT_INIT"/>
    <property type="molecule type" value="mRNA"/>
</dbReference>
<dbReference type="EMBL" id="AK292526">
    <property type="protein sequence ID" value="BAF85215.1"/>
    <property type="molecule type" value="mRNA"/>
</dbReference>
<dbReference type="EMBL" id="AL713775">
    <property type="protein sequence ID" value="CAD28536.1"/>
    <property type="status" value="ALT_SEQ"/>
    <property type="molecule type" value="mRNA"/>
</dbReference>
<dbReference type="EMBL" id="BX640881">
    <property type="protein sequence ID" value="CAE45937.1"/>
    <property type="status" value="ALT_INIT"/>
    <property type="molecule type" value="mRNA"/>
</dbReference>
<dbReference type="EMBL" id="BC110332">
    <property type="protein sequence ID" value="AAI10333.1"/>
    <property type="molecule type" value="mRNA"/>
</dbReference>
<dbReference type="CCDS" id="CCDS32985.1">
    <molecule id="Q8TCN5-1"/>
</dbReference>
<dbReference type="RefSeq" id="NP_001129628.1">
    <molecule id="Q8TCN5-1"/>
    <property type="nucleotide sequence ID" value="NM_001136156.2"/>
</dbReference>
<dbReference type="RefSeq" id="NP_055725.2">
    <molecule id="Q8TCN5-1"/>
    <property type="nucleotide sequence ID" value="NM_014910.4"/>
</dbReference>
<dbReference type="BioGRID" id="116519">
    <property type="interactions" value="57"/>
</dbReference>
<dbReference type="DIP" id="DIP-47281N"/>
<dbReference type="FunCoup" id="Q8TCN5">
    <property type="interactions" value="4047"/>
</dbReference>
<dbReference type="IntAct" id="Q8TCN5">
    <property type="interactions" value="36"/>
</dbReference>
<dbReference type="MINT" id="Q8TCN5"/>
<dbReference type="STRING" id="9606.ENSP00000348162"/>
<dbReference type="GlyGen" id="Q8TCN5">
    <property type="glycosylation" value="3 sites, 1 N-linked glycan (1 site), 1 O-linked glycan (2 sites)"/>
</dbReference>
<dbReference type="iPTMnet" id="Q8TCN5"/>
<dbReference type="PhosphoSitePlus" id="Q8TCN5"/>
<dbReference type="BioMuta" id="ZNF507"/>
<dbReference type="DMDM" id="205371823"/>
<dbReference type="CPTAC" id="CPTAC-1215"/>
<dbReference type="jPOST" id="Q8TCN5"/>
<dbReference type="MassIVE" id="Q8TCN5"/>
<dbReference type="PaxDb" id="9606-ENSP00000312277"/>
<dbReference type="PeptideAtlas" id="Q8TCN5"/>
<dbReference type="ProteomicsDB" id="74147">
    <molecule id="Q8TCN5-1"/>
</dbReference>
<dbReference type="ProteomicsDB" id="74148">
    <molecule id="Q8TCN5-2"/>
</dbReference>
<dbReference type="Pumba" id="Q8TCN5"/>
<dbReference type="Antibodypedia" id="28867">
    <property type="antibodies" value="40 antibodies from 13 providers"/>
</dbReference>
<dbReference type="DNASU" id="22847"/>
<dbReference type="Ensembl" id="ENST00000311921.8">
    <molecule id="Q8TCN5-1"/>
    <property type="protein sequence ID" value="ENSP00000312277.2"/>
    <property type="gene ID" value="ENSG00000168813.17"/>
</dbReference>
<dbReference type="Ensembl" id="ENST00000355898.6">
    <molecule id="Q8TCN5-1"/>
    <property type="protein sequence ID" value="ENSP00000348162.4"/>
    <property type="gene ID" value="ENSG00000168813.17"/>
</dbReference>
<dbReference type="GeneID" id="22847"/>
<dbReference type="KEGG" id="hsa:22847"/>
<dbReference type="MANE-Select" id="ENST00000355898.6">
    <property type="protein sequence ID" value="ENSP00000348162.4"/>
    <property type="RefSeq nucleotide sequence ID" value="NM_001136156.2"/>
    <property type="RefSeq protein sequence ID" value="NP_001129628.1"/>
</dbReference>
<dbReference type="UCSC" id="uc002ntd.4">
    <molecule id="Q8TCN5-1"/>
    <property type="organism name" value="human"/>
</dbReference>
<dbReference type="AGR" id="HGNC:23783"/>
<dbReference type="CTD" id="22847"/>
<dbReference type="DisGeNET" id="22847"/>
<dbReference type="GeneCards" id="ZNF507"/>
<dbReference type="HGNC" id="HGNC:23783">
    <property type="gene designation" value="ZNF507"/>
</dbReference>
<dbReference type="HPA" id="ENSG00000168813">
    <property type="expression patterns" value="Low tissue specificity"/>
</dbReference>
<dbReference type="MIM" id="620567">
    <property type="type" value="gene"/>
</dbReference>
<dbReference type="neXtProt" id="NX_Q8TCN5"/>
<dbReference type="OpenTargets" id="ENSG00000168813"/>
<dbReference type="PharmGKB" id="PA134917055"/>
<dbReference type="VEuPathDB" id="HostDB:ENSG00000168813"/>
<dbReference type="eggNOG" id="KOG1721">
    <property type="taxonomic scope" value="Eukaryota"/>
</dbReference>
<dbReference type="GeneTree" id="ENSGT00490000043434"/>
<dbReference type="HOGENOM" id="CLU_013272_0_0_1"/>
<dbReference type="InParanoid" id="Q8TCN5"/>
<dbReference type="OMA" id="KIGCEGR"/>
<dbReference type="OrthoDB" id="10066771at2759"/>
<dbReference type="PAN-GO" id="Q8TCN5">
    <property type="GO annotations" value="2 GO annotations based on evolutionary models"/>
</dbReference>
<dbReference type="PhylomeDB" id="Q8TCN5"/>
<dbReference type="TreeFam" id="TF331496"/>
<dbReference type="PathwayCommons" id="Q8TCN5"/>
<dbReference type="SignaLink" id="Q8TCN5"/>
<dbReference type="BioGRID-ORCS" id="22847">
    <property type="hits" value="12 hits in 1177 CRISPR screens"/>
</dbReference>
<dbReference type="ChiTaRS" id="ZNF507">
    <property type="organism name" value="human"/>
</dbReference>
<dbReference type="GenomeRNAi" id="22847"/>
<dbReference type="Pharos" id="Q8TCN5">
    <property type="development level" value="Tdark"/>
</dbReference>
<dbReference type="PRO" id="PR:Q8TCN5"/>
<dbReference type="Proteomes" id="UP000005640">
    <property type="component" value="Chromosome 19"/>
</dbReference>
<dbReference type="RNAct" id="Q8TCN5">
    <property type="molecule type" value="protein"/>
</dbReference>
<dbReference type="Bgee" id="ENSG00000168813">
    <property type="expression patterns" value="Expressed in endothelial cell and 181 other cell types or tissues"/>
</dbReference>
<dbReference type="ExpressionAtlas" id="Q8TCN5">
    <property type="expression patterns" value="baseline and differential"/>
</dbReference>
<dbReference type="GO" id="GO:0005634">
    <property type="term" value="C:nucleus"/>
    <property type="evidence" value="ECO:0000318"/>
    <property type="project" value="GO_Central"/>
</dbReference>
<dbReference type="GO" id="GO:0003677">
    <property type="term" value="F:DNA binding"/>
    <property type="evidence" value="ECO:0007669"/>
    <property type="project" value="UniProtKB-KW"/>
</dbReference>
<dbReference type="GO" id="GO:0008270">
    <property type="term" value="F:zinc ion binding"/>
    <property type="evidence" value="ECO:0007669"/>
    <property type="project" value="UniProtKB-KW"/>
</dbReference>
<dbReference type="GO" id="GO:0045944">
    <property type="term" value="P:positive regulation of transcription by RNA polymerase II"/>
    <property type="evidence" value="ECO:0000318"/>
    <property type="project" value="GO_Central"/>
</dbReference>
<dbReference type="FunFam" id="3.30.160.60:FF:000719">
    <property type="entry name" value="Zinc finger protein 507"/>
    <property type="match status" value="1"/>
</dbReference>
<dbReference type="FunFam" id="3.30.160.60:FF:000884">
    <property type="entry name" value="Zinc finger protein 507"/>
    <property type="match status" value="1"/>
</dbReference>
<dbReference type="FunFam" id="3.30.160.60:FF:000964">
    <property type="entry name" value="zinc finger protein 507"/>
    <property type="match status" value="1"/>
</dbReference>
<dbReference type="Gene3D" id="3.30.160.60">
    <property type="entry name" value="Classic Zinc Finger"/>
    <property type="match status" value="3"/>
</dbReference>
<dbReference type="InterPro" id="IPR050688">
    <property type="entry name" value="Zinc_finger/UBP_domain"/>
</dbReference>
<dbReference type="InterPro" id="IPR036236">
    <property type="entry name" value="Znf_C2H2_sf"/>
</dbReference>
<dbReference type="InterPro" id="IPR013087">
    <property type="entry name" value="Znf_C2H2_type"/>
</dbReference>
<dbReference type="PANTHER" id="PTHR24403">
    <property type="entry name" value="ZINC FINGER PROTEIN"/>
    <property type="match status" value="1"/>
</dbReference>
<dbReference type="PANTHER" id="PTHR24403:SF74">
    <property type="entry name" value="ZINC FINGER PROTEIN 507"/>
    <property type="match status" value="1"/>
</dbReference>
<dbReference type="Pfam" id="PF00096">
    <property type="entry name" value="zf-C2H2"/>
    <property type="match status" value="1"/>
</dbReference>
<dbReference type="SMART" id="SM00355">
    <property type="entry name" value="ZnF_C2H2"/>
    <property type="match status" value="9"/>
</dbReference>
<dbReference type="SUPFAM" id="SSF57667">
    <property type="entry name" value="beta-beta-alpha zinc fingers"/>
    <property type="match status" value="3"/>
</dbReference>
<dbReference type="PROSITE" id="PS00028">
    <property type="entry name" value="ZINC_FINGER_C2H2_1"/>
    <property type="match status" value="3"/>
</dbReference>
<dbReference type="PROSITE" id="PS50157">
    <property type="entry name" value="ZINC_FINGER_C2H2_2"/>
    <property type="match status" value="5"/>
</dbReference>
<proteinExistence type="evidence at protein level"/>
<accession>Q8TCN5</accession>
<accession>A8K911</accession>
<accession>Q2TBF1</accession>
<accession>Q6MZU0</accession>
<accession>Q9UPR8</accession>
<gene>
    <name type="primary">ZNF507</name>
    <name type="synonym">KIAA1084</name>
</gene>